<comment type="function">
    <text evidence="1">Plays an essential role in the initiation and regulation of chromosomal replication. ATP-DnaA binds to the origin of replication (oriC) to initiate formation of the DNA replication initiation complex once per cell cycle. Binds the DnaA box (a 9 base pair repeat at the origin) and separates the double-stranded (ds)DNA. Forms a right-handed helical filament on oriC DNA; dsDNA binds to the exterior of the filament while single-stranded (ss)DNA is stabiized in the filament's interior. The ATP-DnaA-oriC complex binds and stabilizes one strand of the AT-rich DNA unwinding element (DUE), permitting loading of DNA polymerase. After initiation quickly degrades to an ADP-DnaA complex that is not apt for DNA replication. Binds acidic phospholipids.</text>
</comment>
<comment type="subunit">
    <text evidence="1">Oligomerizes as a right-handed, spiral filament on DNA at oriC.</text>
</comment>
<comment type="subcellular location">
    <subcellularLocation>
        <location evidence="1">Cytoplasm</location>
    </subcellularLocation>
</comment>
<comment type="domain">
    <text evidence="1">Domain I is involved in oligomerization and binding regulators, domain II is flexibile and of varying length in different bacteria, domain III forms the AAA+ region, while domain IV binds dsDNA.</text>
</comment>
<comment type="similarity">
    <text evidence="1 3">Belongs to the DnaA family.</text>
</comment>
<name>DNAA_MICLU</name>
<feature type="chain" id="PRO_0000114207" description="Chromosomal replication initiator protein DnaA">
    <location>
        <begin position="1"/>
        <end position="515"/>
    </location>
</feature>
<feature type="region of interest" description="Domain I, interacts with DnaA modulators" evidence="1">
    <location>
        <begin position="1"/>
        <end position="89"/>
    </location>
</feature>
<feature type="region of interest" description="Domain II" evidence="1">
    <location>
        <begin position="89"/>
        <end position="172"/>
    </location>
</feature>
<feature type="region of interest" description="Disordered" evidence="2">
    <location>
        <begin position="90"/>
        <end position="130"/>
    </location>
</feature>
<feature type="region of interest" description="Disordered" evidence="2">
    <location>
        <begin position="142"/>
        <end position="171"/>
    </location>
</feature>
<feature type="region of interest" description="Domain III, AAA+ region" evidence="1">
    <location>
        <begin position="173"/>
        <end position="389"/>
    </location>
</feature>
<feature type="region of interest" description="Domain IV, binds dsDNA" evidence="1">
    <location>
        <begin position="390"/>
        <end position="515"/>
    </location>
</feature>
<feature type="compositionally biased region" description="Low complexity" evidence="2">
    <location>
        <begin position="102"/>
        <end position="114"/>
    </location>
</feature>
<feature type="compositionally biased region" description="Low complexity" evidence="2">
    <location>
        <begin position="143"/>
        <end position="160"/>
    </location>
</feature>
<feature type="binding site" evidence="1">
    <location>
        <position position="217"/>
    </location>
    <ligand>
        <name>ATP</name>
        <dbReference type="ChEBI" id="CHEBI:30616"/>
    </ligand>
</feature>
<feature type="binding site" evidence="1">
    <location>
        <position position="219"/>
    </location>
    <ligand>
        <name>ATP</name>
        <dbReference type="ChEBI" id="CHEBI:30616"/>
    </ligand>
</feature>
<feature type="binding site" evidence="1">
    <location>
        <position position="220"/>
    </location>
    <ligand>
        <name>ATP</name>
        <dbReference type="ChEBI" id="CHEBI:30616"/>
    </ligand>
</feature>
<feature type="binding site" evidence="1">
    <location>
        <position position="221"/>
    </location>
    <ligand>
        <name>ATP</name>
        <dbReference type="ChEBI" id="CHEBI:30616"/>
    </ligand>
</feature>
<organism>
    <name type="scientific">Micrococcus luteus</name>
    <name type="common">Micrococcus lysodeikticus</name>
    <dbReference type="NCBI Taxonomy" id="1270"/>
    <lineage>
        <taxon>Bacteria</taxon>
        <taxon>Bacillati</taxon>
        <taxon>Actinomycetota</taxon>
        <taxon>Actinomycetes</taxon>
        <taxon>Micrococcales</taxon>
        <taxon>Micrococcaceae</taxon>
        <taxon>Micrococcus</taxon>
    </lineage>
</organism>
<gene>
    <name evidence="1" type="primary">dnaA</name>
</gene>
<protein>
    <recommendedName>
        <fullName evidence="1">Chromosomal replication initiator protein DnaA</fullName>
    </recommendedName>
</protein>
<evidence type="ECO:0000255" key="1">
    <source>
        <dbReference type="HAMAP-Rule" id="MF_00377"/>
    </source>
</evidence>
<evidence type="ECO:0000256" key="2">
    <source>
        <dbReference type="SAM" id="MobiDB-lite"/>
    </source>
</evidence>
<evidence type="ECO:0000305" key="3"/>
<keyword id="KW-0067">ATP-binding</keyword>
<keyword id="KW-0963">Cytoplasm</keyword>
<keyword id="KW-0235">DNA replication</keyword>
<keyword id="KW-0238">DNA-binding</keyword>
<keyword id="KW-0446">Lipid-binding</keyword>
<keyword id="KW-0547">Nucleotide-binding</keyword>
<dbReference type="EMBL" id="M34006">
    <property type="protein sequence ID" value="AAA25315.1"/>
    <property type="molecule type" value="Genomic_DNA"/>
</dbReference>
<dbReference type="PIR" id="JQ0739">
    <property type="entry name" value="IQMCL"/>
</dbReference>
<dbReference type="RefSeq" id="WP_012750665.1">
    <property type="nucleotide sequence ID" value="NZ_NAQZ01000014.1"/>
</dbReference>
<dbReference type="SMR" id="P21173"/>
<dbReference type="STRING" id="1232675.GCA_000309825_00063"/>
<dbReference type="GeneID" id="93344190"/>
<dbReference type="PATRIC" id="fig|1270.31.peg.1"/>
<dbReference type="OMA" id="DFIHFYQ"/>
<dbReference type="GO" id="GO:0005737">
    <property type="term" value="C:cytoplasm"/>
    <property type="evidence" value="ECO:0007669"/>
    <property type="project" value="UniProtKB-SubCell"/>
</dbReference>
<dbReference type="GO" id="GO:0005886">
    <property type="term" value="C:plasma membrane"/>
    <property type="evidence" value="ECO:0007669"/>
    <property type="project" value="TreeGrafter"/>
</dbReference>
<dbReference type="GO" id="GO:0005524">
    <property type="term" value="F:ATP binding"/>
    <property type="evidence" value="ECO:0007669"/>
    <property type="project" value="UniProtKB-UniRule"/>
</dbReference>
<dbReference type="GO" id="GO:0016887">
    <property type="term" value="F:ATP hydrolysis activity"/>
    <property type="evidence" value="ECO:0007669"/>
    <property type="project" value="InterPro"/>
</dbReference>
<dbReference type="GO" id="GO:0003688">
    <property type="term" value="F:DNA replication origin binding"/>
    <property type="evidence" value="ECO:0007669"/>
    <property type="project" value="UniProtKB-UniRule"/>
</dbReference>
<dbReference type="GO" id="GO:0008289">
    <property type="term" value="F:lipid binding"/>
    <property type="evidence" value="ECO:0007669"/>
    <property type="project" value="UniProtKB-KW"/>
</dbReference>
<dbReference type="GO" id="GO:0006270">
    <property type="term" value="P:DNA replication initiation"/>
    <property type="evidence" value="ECO:0007669"/>
    <property type="project" value="UniProtKB-UniRule"/>
</dbReference>
<dbReference type="GO" id="GO:0006275">
    <property type="term" value="P:regulation of DNA replication"/>
    <property type="evidence" value="ECO:0007669"/>
    <property type="project" value="UniProtKB-UniRule"/>
</dbReference>
<dbReference type="CDD" id="cd00009">
    <property type="entry name" value="AAA"/>
    <property type="match status" value="1"/>
</dbReference>
<dbReference type="CDD" id="cd06571">
    <property type="entry name" value="Bac_DnaA_C"/>
    <property type="match status" value="1"/>
</dbReference>
<dbReference type="FunFam" id="1.10.1750.10:FF:000002">
    <property type="entry name" value="Chromosomal replication initiator protein DnaA"/>
    <property type="match status" value="1"/>
</dbReference>
<dbReference type="FunFam" id="1.10.8.60:FF:000003">
    <property type="entry name" value="Chromosomal replication initiator protein DnaA"/>
    <property type="match status" value="1"/>
</dbReference>
<dbReference type="FunFam" id="3.40.50.300:FF:000150">
    <property type="entry name" value="Chromosomal replication initiator protein DnaA"/>
    <property type="match status" value="1"/>
</dbReference>
<dbReference type="Gene3D" id="1.10.1750.10">
    <property type="match status" value="1"/>
</dbReference>
<dbReference type="Gene3D" id="1.10.8.60">
    <property type="match status" value="1"/>
</dbReference>
<dbReference type="Gene3D" id="3.40.50.300">
    <property type="entry name" value="P-loop containing nucleotide triphosphate hydrolases"/>
    <property type="match status" value="1"/>
</dbReference>
<dbReference type="HAMAP" id="MF_00377">
    <property type="entry name" value="DnaA_bact"/>
    <property type="match status" value="1"/>
</dbReference>
<dbReference type="InterPro" id="IPR003593">
    <property type="entry name" value="AAA+_ATPase"/>
</dbReference>
<dbReference type="InterPro" id="IPR001957">
    <property type="entry name" value="Chromosome_initiator_DnaA"/>
</dbReference>
<dbReference type="InterPro" id="IPR020591">
    <property type="entry name" value="Chromosome_initiator_DnaA-like"/>
</dbReference>
<dbReference type="InterPro" id="IPR018312">
    <property type="entry name" value="Chromosome_initiator_DnaA_CS"/>
</dbReference>
<dbReference type="InterPro" id="IPR013159">
    <property type="entry name" value="DnaA_C"/>
</dbReference>
<dbReference type="InterPro" id="IPR013317">
    <property type="entry name" value="DnaA_dom"/>
</dbReference>
<dbReference type="InterPro" id="IPR027417">
    <property type="entry name" value="P-loop_NTPase"/>
</dbReference>
<dbReference type="InterPro" id="IPR010921">
    <property type="entry name" value="Trp_repressor/repl_initiator"/>
</dbReference>
<dbReference type="NCBIfam" id="TIGR00362">
    <property type="entry name" value="DnaA"/>
    <property type="match status" value="1"/>
</dbReference>
<dbReference type="NCBIfam" id="NF010686">
    <property type="entry name" value="PRK14086.1"/>
    <property type="match status" value="1"/>
</dbReference>
<dbReference type="PANTHER" id="PTHR30050">
    <property type="entry name" value="CHROMOSOMAL REPLICATION INITIATOR PROTEIN DNAA"/>
    <property type="match status" value="1"/>
</dbReference>
<dbReference type="PANTHER" id="PTHR30050:SF2">
    <property type="entry name" value="CHROMOSOMAL REPLICATION INITIATOR PROTEIN DNAA"/>
    <property type="match status" value="1"/>
</dbReference>
<dbReference type="Pfam" id="PF00308">
    <property type="entry name" value="Bac_DnaA"/>
    <property type="match status" value="1"/>
</dbReference>
<dbReference type="Pfam" id="PF08299">
    <property type="entry name" value="Bac_DnaA_C"/>
    <property type="match status" value="1"/>
</dbReference>
<dbReference type="PRINTS" id="PR00051">
    <property type="entry name" value="DNAA"/>
</dbReference>
<dbReference type="SMART" id="SM00382">
    <property type="entry name" value="AAA"/>
    <property type="match status" value="1"/>
</dbReference>
<dbReference type="SMART" id="SM00760">
    <property type="entry name" value="Bac_DnaA_C"/>
    <property type="match status" value="1"/>
</dbReference>
<dbReference type="SUPFAM" id="SSF52540">
    <property type="entry name" value="P-loop containing nucleoside triphosphate hydrolases"/>
    <property type="match status" value="1"/>
</dbReference>
<dbReference type="SUPFAM" id="SSF48295">
    <property type="entry name" value="TrpR-like"/>
    <property type="match status" value="1"/>
</dbReference>
<dbReference type="PROSITE" id="PS01008">
    <property type="entry name" value="DNAA"/>
    <property type="match status" value="1"/>
</dbReference>
<accession>P21173</accession>
<proteinExistence type="inferred from homology"/>
<reference key="1">
    <citation type="journal article" date="1990" name="Gene">
        <title>Structure of the dnaA region of Micrococcus luteus: conservation and variations among eubacteria.</title>
        <authorList>
            <person name="Fujita M.Q."/>
            <person name="Yoshikawa H."/>
            <person name="Ogasawara N."/>
        </authorList>
    </citation>
    <scope>NUCLEOTIDE SEQUENCE [GENOMIC DNA]</scope>
</reference>
<sequence length="515" mass="56876">MVADQAVLSSWRSVVGSLEDDARVSARLMGFVYLAQPQGLIGNTLLLAVPNETTRETLQGTQVADALTDALTQEFREEILLAISIDANLQPPRTPSSEARRSSLAGGPSGAAAPDVELPPAATAATSRRAVAEELPGFRIEPPADVVPAANAAPNGNGKPTPAPPSTSAETSRLNDRYHFETFVIGSSNRFAHAAANAVAEAPAKAYNPLFIYGESGLGKTHLLHAIGHYARRLYPGLRVRYVNSEEFTNDFINSIRHDEGASFKQVYRNVDILLIDDIQFLADKEATVEEFFHTFNTLYNNNKQVVITSDLPPKQLSGFEDRLRSRFEWGLITDIQPPDLETRIAILRKKAEAEGLVAPPEALEYIASRISTNIRELEGALIRVTAFASLNRQTVDIELAEHVLKDLITDETAHEITPELILHATGEYFNLTLEELTSKSRTRTLVTARQIAMYLLRELTEMSLPKIGQVLGGRDHTTVIHADRKIRELMAERRTIYNQVTELTNEIKRKQRGA</sequence>